<feature type="chain" id="PRO_0000243876" description="Small ribosomal subunit protein bS16">
    <location>
        <begin position="1"/>
        <end position="90"/>
    </location>
</feature>
<proteinExistence type="inferred from homology"/>
<evidence type="ECO:0000255" key="1">
    <source>
        <dbReference type="HAMAP-Rule" id="MF_00385"/>
    </source>
</evidence>
<evidence type="ECO:0000305" key="2"/>
<protein>
    <recommendedName>
        <fullName evidence="1">Small ribosomal subunit protein bS16</fullName>
    </recommendedName>
    <alternativeName>
        <fullName evidence="2">30S ribosomal protein S16</fullName>
    </alternativeName>
</protein>
<sequence length="90" mass="10282">MAVKIRLTRMGSKKKPFYRINVADSRAPRDGRFIETVGTYNPLVAENQVTIKEERVLEWLSKGAQPSDTVRNLLSKAGVMTKFHDQKFSK</sequence>
<name>RS16_STRA1</name>
<gene>
    <name evidence="1" type="primary">rpsP</name>
    <name type="ordered locus">SAK_1391</name>
</gene>
<reference key="1">
    <citation type="journal article" date="2005" name="Proc. Natl. Acad. Sci. U.S.A.">
        <title>Genome analysis of multiple pathogenic isolates of Streptococcus agalactiae: implications for the microbial 'pan-genome'.</title>
        <authorList>
            <person name="Tettelin H."/>
            <person name="Masignani V."/>
            <person name="Cieslewicz M.J."/>
            <person name="Donati C."/>
            <person name="Medini D."/>
            <person name="Ward N.L."/>
            <person name="Angiuoli S.V."/>
            <person name="Crabtree J."/>
            <person name="Jones A.L."/>
            <person name="Durkin A.S."/>
            <person name="DeBoy R.T."/>
            <person name="Davidsen T.M."/>
            <person name="Mora M."/>
            <person name="Scarselli M."/>
            <person name="Margarit y Ros I."/>
            <person name="Peterson J.D."/>
            <person name="Hauser C.R."/>
            <person name="Sundaram J.P."/>
            <person name="Nelson W.C."/>
            <person name="Madupu R."/>
            <person name="Brinkac L.M."/>
            <person name="Dodson R.J."/>
            <person name="Rosovitz M.J."/>
            <person name="Sullivan S.A."/>
            <person name="Daugherty S.C."/>
            <person name="Haft D.H."/>
            <person name="Selengut J."/>
            <person name="Gwinn M.L."/>
            <person name="Zhou L."/>
            <person name="Zafar N."/>
            <person name="Khouri H."/>
            <person name="Radune D."/>
            <person name="Dimitrov G."/>
            <person name="Watkins K."/>
            <person name="O'Connor K.J."/>
            <person name="Smith S."/>
            <person name="Utterback T.R."/>
            <person name="White O."/>
            <person name="Rubens C.E."/>
            <person name="Grandi G."/>
            <person name="Madoff L.C."/>
            <person name="Kasper D.L."/>
            <person name="Telford J.L."/>
            <person name="Wessels M.R."/>
            <person name="Rappuoli R."/>
            <person name="Fraser C.M."/>
        </authorList>
    </citation>
    <scope>NUCLEOTIDE SEQUENCE [LARGE SCALE GENOMIC DNA]</scope>
    <source>
        <strain>ATCC 27591 / A909 / CDC SS700</strain>
    </source>
</reference>
<organism>
    <name type="scientific">Streptococcus agalactiae serotype Ia (strain ATCC 27591 / A909 / CDC SS700)</name>
    <dbReference type="NCBI Taxonomy" id="205921"/>
    <lineage>
        <taxon>Bacteria</taxon>
        <taxon>Bacillati</taxon>
        <taxon>Bacillota</taxon>
        <taxon>Bacilli</taxon>
        <taxon>Lactobacillales</taxon>
        <taxon>Streptococcaceae</taxon>
        <taxon>Streptococcus</taxon>
    </lineage>
</organism>
<accession>Q3K0F4</accession>
<comment type="similarity">
    <text evidence="1">Belongs to the bacterial ribosomal protein bS16 family.</text>
</comment>
<dbReference type="EMBL" id="CP000114">
    <property type="protein sequence ID" value="ABA45858.1"/>
    <property type="molecule type" value="Genomic_DNA"/>
</dbReference>
<dbReference type="RefSeq" id="WP_000268757.1">
    <property type="nucleotide sequence ID" value="NC_007432.1"/>
</dbReference>
<dbReference type="SMR" id="Q3K0F4"/>
<dbReference type="GeneID" id="66886224"/>
<dbReference type="KEGG" id="sak:SAK_1391"/>
<dbReference type="HOGENOM" id="CLU_100590_5_0_9"/>
<dbReference type="GO" id="GO:0005737">
    <property type="term" value="C:cytoplasm"/>
    <property type="evidence" value="ECO:0007669"/>
    <property type="project" value="UniProtKB-ARBA"/>
</dbReference>
<dbReference type="GO" id="GO:0015935">
    <property type="term" value="C:small ribosomal subunit"/>
    <property type="evidence" value="ECO:0007669"/>
    <property type="project" value="TreeGrafter"/>
</dbReference>
<dbReference type="GO" id="GO:0003735">
    <property type="term" value="F:structural constituent of ribosome"/>
    <property type="evidence" value="ECO:0007669"/>
    <property type="project" value="InterPro"/>
</dbReference>
<dbReference type="GO" id="GO:0006412">
    <property type="term" value="P:translation"/>
    <property type="evidence" value="ECO:0007669"/>
    <property type="project" value="UniProtKB-UniRule"/>
</dbReference>
<dbReference type="FunFam" id="3.30.1320.10:FF:000002">
    <property type="entry name" value="30S ribosomal protein S16"/>
    <property type="match status" value="1"/>
</dbReference>
<dbReference type="Gene3D" id="3.30.1320.10">
    <property type="match status" value="1"/>
</dbReference>
<dbReference type="HAMAP" id="MF_00385">
    <property type="entry name" value="Ribosomal_bS16"/>
    <property type="match status" value="1"/>
</dbReference>
<dbReference type="InterPro" id="IPR000307">
    <property type="entry name" value="Ribosomal_bS16"/>
</dbReference>
<dbReference type="InterPro" id="IPR023803">
    <property type="entry name" value="Ribosomal_bS16_dom_sf"/>
</dbReference>
<dbReference type="NCBIfam" id="TIGR00002">
    <property type="entry name" value="S16"/>
    <property type="match status" value="1"/>
</dbReference>
<dbReference type="PANTHER" id="PTHR12919">
    <property type="entry name" value="30S RIBOSOMAL PROTEIN S16"/>
    <property type="match status" value="1"/>
</dbReference>
<dbReference type="PANTHER" id="PTHR12919:SF20">
    <property type="entry name" value="SMALL RIBOSOMAL SUBUNIT PROTEIN BS16M"/>
    <property type="match status" value="1"/>
</dbReference>
<dbReference type="Pfam" id="PF00886">
    <property type="entry name" value="Ribosomal_S16"/>
    <property type="match status" value="1"/>
</dbReference>
<dbReference type="SUPFAM" id="SSF54565">
    <property type="entry name" value="Ribosomal protein S16"/>
    <property type="match status" value="1"/>
</dbReference>
<keyword id="KW-0687">Ribonucleoprotein</keyword>
<keyword id="KW-0689">Ribosomal protein</keyword>